<evidence type="ECO:0000255" key="1">
    <source>
        <dbReference type="HAMAP-Rule" id="MF_01445"/>
    </source>
</evidence>
<dbReference type="EC" id="2.3.1.234" evidence="1"/>
<dbReference type="EMBL" id="AE017244">
    <property type="protein sequence ID" value="AAZ53997.1"/>
    <property type="molecule type" value="Genomic_DNA"/>
</dbReference>
<dbReference type="RefSeq" id="WP_011206487.1">
    <property type="nucleotide sequence ID" value="NC_007332.1"/>
</dbReference>
<dbReference type="SMR" id="Q4A792"/>
<dbReference type="GeneID" id="41334937"/>
<dbReference type="KEGG" id="mhp:MHP7448_0635"/>
<dbReference type="HOGENOM" id="CLU_023208_0_1_14"/>
<dbReference type="Proteomes" id="UP000000553">
    <property type="component" value="Chromosome"/>
</dbReference>
<dbReference type="GO" id="GO:0005737">
    <property type="term" value="C:cytoplasm"/>
    <property type="evidence" value="ECO:0007669"/>
    <property type="project" value="UniProtKB-SubCell"/>
</dbReference>
<dbReference type="GO" id="GO:0005506">
    <property type="term" value="F:iron ion binding"/>
    <property type="evidence" value="ECO:0007669"/>
    <property type="project" value="UniProtKB-UniRule"/>
</dbReference>
<dbReference type="GO" id="GO:0061711">
    <property type="term" value="F:N(6)-L-threonylcarbamoyladenine synthase activity"/>
    <property type="evidence" value="ECO:0007669"/>
    <property type="project" value="UniProtKB-EC"/>
</dbReference>
<dbReference type="GO" id="GO:0002949">
    <property type="term" value="P:tRNA threonylcarbamoyladenosine modification"/>
    <property type="evidence" value="ECO:0007669"/>
    <property type="project" value="UniProtKB-UniRule"/>
</dbReference>
<dbReference type="Gene3D" id="3.30.420.40">
    <property type="match status" value="2"/>
</dbReference>
<dbReference type="HAMAP" id="MF_01445">
    <property type="entry name" value="TsaD"/>
    <property type="match status" value="1"/>
</dbReference>
<dbReference type="InterPro" id="IPR043129">
    <property type="entry name" value="ATPase_NBD"/>
</dbReference>
<dbReference type="InterPro" id="IPR000905">
    <property type="entry name" value="Gcp-like_dom"/>
</dbReference>
<dbReference type="InterPro" id="IPR017861">
    <property type="entry name" value="KAE1/TsaD"/>
</dbReference>
<dbReference type="InterPro" id="IPR022450">
    <property type="entry name" value="TsaD"/>
</dbReference>
<dbReference type="NCBIfam" id="TIGR00329">
    <property type="entry name" value="gcp_kae1"/>
    <property type="match status" value="1"/>
</dbReference>
<dbReference type="NCBIfam" id="TIGR03723">
    <property type="entry name" value="T6A_TsaD_YgjD"/>
    <property type="match status" value="1"/>
</dbReference>
<dbReference type="PANTHER" id="PTHR11735">
    <property type="entry name" value="TRNA N6-ADENOSINE THREONYLCARBAMOYLTRANSFERASE"/>
    <property type="match status" value="1"/>
</dbReference>
<dbReference type="PANTHER" id="PTHR11735:SF6">
    <property type="entry name" value="TRNA N6-ADENOSINE THREONYLCARBAMOYLTRANSFERASE, MITOCHONDRIAL"/>
    <property type="match status" value="1"/>
</dbReference>
<dbReference type="Pfam" id="PF00814">
    <property type="entry name" value="TsaD"/>
    <property type="match status" value="1"/>
</dbReference>
<dbReference type="PRINTS" id="PR00789">
    <property type="entry name" value="OSIALOPTASE"/>
</dbReference>
<dbReference type="SUPFAM" id="SSF53067">
    <property type="entry name" value="Actin-like ATPase domain"/>
    <property type="match status" value="1"/>
</dbReference>
<name>TSAD_MESH7</name>
<sequence length="322" mass="35961">MKILGIETSHDDASVALFSENKVEILLTISQFELHEQFGGTVPELASREHSRNLAIILEKLLGKNIDFSTIDAIAYTKNPGLIGPLKIGFLFASALSLFFNKPLIPIDHLLGHFWSAAIENDLEFPVLSLLISGGHTQLIFAENKNNLEIIGSTVDDALGEIYDKIGRSLGCGYPGGPKIDLIWQQNNVRNMELIDFSLPKVLENPLDFSFSGLKTQVINYTNNLKENYLFSQKKVVEIAVSFQKTVIKYLKRQLDLALKTKKNVKTITLVGGVAANSEIRKLIKTYENKYKVVIPKKEFCTDNGAMIAKAAQIFLKFNEEK</sequence>
<gene>
    <name evidence="1" type="primary">tsaD</name>
    <name type="synonym">gcp</name>
    <name type="ordered locus">MHP7448_0635</name>
</gene>
<organism>
    <name type="scientific">Mesomycoplasma hyopneumoniae (strain 7448)</name>
    <name type="common">Mycoplasma hyopneumoniae</name>
    <dbReference type="NCBI Taxonomy" id="262722"/>
    <lineage>
        <taxon>Bacteria</taxon>
        <taxon>Bacillati</taxon>
        <taxon>Mycoplasmatota</taxon>
        <taxon>Mycoplasmoidales</taxon>
        <taxon>Metamycoplasmataceae</taxon>
        <taxon>Mesomycoplasma</taxon>
    </lineage>
</organism>
<protein>
    <recommendedName>
        <fullName evidence="1">tRNA N6-adenosine threonylcarbamoyltransferase</fullName>
        <ecNumber evidence="1">2.3.1.234</ecNumber>
    </recommendedName>
    <alternativeName>
        <fullName evidence="1">N6-L-threonylcarbamoyladenine synthase</fullName>
        <shortName evidence="1">t(6)A synthase</shortName>
    </alternativeName>
    <alternativeName>
        <fullName evidence="1">t(6)A37 threonylcarbamoyladenosine biosynthesis protein TsaD</fullName>
    </alternativeName>
    <alternativeName>
        <fullName evidence="1">tRNA threonylcarbamoyladenosine biosynthesis protein TsaD</fullName>
    </alternativeName>
</protein>
<comment type="function">
    <text evidence="1">Required for the formation of a threonylcarbamoyl group on adenosine at position 37 (t(6)A37) in tRNAs that read codons beginning with adenine. Is involved in the transfer of the threonylcarbamoyl moiety of threonylcarbamoyl-AMP (TC-AMP) to the N6 group of A37, together with TsaE and TsaB. TsaD likely plays a direct catalytic role in this reaction.</text>
</comment>
<comment type="catalytic activity">
    <reaction evidence="1">
        <text>L-threonylcarbamoyladenylate + adenosine(37) in tRNA = N(6)-L-threonylcarbamoyladenosine(37) in tRNA + AMP + H(+)</text>
        <dbReference type="Rhea" id="RHEA:37059"/>
        <dbReference type="Rhea" id="RHEA-COMP:10162"/>
        <dbReference type="Rhea" id="RHEA-COMP:10163"/>
        <dbReference type="ChEBI" id="CHEBI:15378"/>
        <dbReference type="ChEBI" id="CHEBI:73682"/>
        <dbReference type="ChEBI" id="CHEBI:74411"/>
        <dbReference type="ChEBI" id="CHEBI:74418"/>
        <dbReference type="ChEBI" id="CHEBI:456215"/>
        <dbReference type="EC" id="2.3.1.234"/>
    </reaction>
</comment>
<comment type="cofactor">
    <cofactor evidence="1">
        <name>Fe(2+)</name>
        <dbReference type="ChEBI" id="CHEBI:29033"/>
    </cofactor>
    <text evidence="1">Binds 1 Fe(2+) ion per subunit.</text>
</comment>
<comment type="subcellular location">
    <subcellularLocation>
        <location evidence="1">Cytoplasm</location>
    </subcellularLocation>
</comment>
<comment type="similarity">
    <text evidence="1">Belongs to the KAE1 / TsaD family.</text>
</comment>
<keyword id="KW-0012">Acyltransferase</keyword>
<keyword id="KW-0963">Cytoplasm</keyword>
<keyword id="KW-0408">Iron</keyword>
<keyword id="KW-0479">Metal-binding</keyword>
<keyword id="KW-0808">Transferase</keyword>
<keyword id="KW-0819">tRNA processing</keyword>
<accession>Q4A792</accession>
<feature type="chain" id="PRO_0000303441" description="tRNA N6-adenosine threonylcarbamoyltransferase">
    <location>
        <begin position="1"/>
        <end position="322"/>
    </location>
</feature>
<feature type="binding site" evidence="1">
    <location>
        <position position="109"/>
    </location>
    <ligand>
        <name>Fe cation</name>
        <dbReference type="ChEBI" id="CHEBI:24875"/>
    </ligand>
</feature>
<feature type="binding site" evidence="1">
    <location>
        <position position="113"/>
    </location>
    <ligand>
        <name>Fe cation</name>
        <dbReference type="ChEBI" id="CHEBI:24875"/>
    </ligand>
</feature>
<feature type="binding site" evidence="1">
    <location>
        <begin position="131"/>
        <end position="135"/>
    </location>
    <ligand>
        <name>substrate</name>
    </ligand>
</feature>
<feature type="binding site" evidence="1">
    <location>
        <position position="164"/>
    </location>
    <ligand>
        <name>substrate</name>
    </ligand>
</feature>
<feature type="binding site" evidence="1">
    <location>
        <position position="177"/>
    </location>
    <ligand>
        <name>substrate</name>
    </ligand>
</feature>
<feature type="binding site" evidence="1">
    <location>
        <position position="181"/>
    </location>
    <ligand>
        <name>substrate</name>
    </ligand>
</feature>
<feature type="binding site" evidence="1">
    <location>
        <position position="277"/>
    </location>
    <ligand>
        <name>substrate</name>
    </ligand>
</feature>
<feature type="binding site" evidence="1">
    <location>
        <position position="303"/>
    </location>
    <ligand>
        <name>Fe cation</name>
        <dbReference type="ChEBI" id="CHEBI:24875"/>
    </ligand>
</feature>
<proteinExistence type="inferred from homology"/>
<reference key="1">
    <citation type="journal article" date="2005" name="J. Bacteriol.">
        <title>Swine and poultry pathogens: the complete genome sequences of two strains of Mycoplasma hyopneumoniae and a strain of Mycoplasma synoviae.</title>
        <authorList>
            <person name="Vasconcelos A.T.R."/>
            <person name="Ferreira H.B."/>
            <person name="Bizarro C.V."/>
            <person name="Bonatto S.L."/>
            <person name="Carvalho M.O."/>
            <person name="Pinto P.M."/>
            <person name="Almeida D.F."/>
            <person name="Almeida L.G.P."/>
            <person name="Almeida R."/>
            <person name="Alves-Junior L."/>
            <person name="Assuncao E.N."/>
            <person name="Azevedo V.A.C."/>
            <person name="Bogo M.R."/>
            <person name="Brigido M.M."/>
            <person name="Brocchi M."/>
            <person name="Burity H.A."/>
            <person name="Camargo A.A."/>
            <person name="Camargo S.S."/>
            <person name="Carepo M.S."/>
            <person name="Carraro D.M."/>
            <person name="de Mattos Cascardo J.C."/>
            <person name="Castro L.A."/>
            <person name="Cavalcanti G."/>
            <person name="Chemale G."/>
            <person name="Collevatti R.G."/>
            <person name="Cunha C.W."/>
            <person name="Dallagiovanna B."/>
            <person name="Dambros B.P."/>
            <person name="Dellagostin O.A."/>
            <person name="Falcao C."/>
            <person name="Fantinatti-Garboggini F."/>
            <person name="Felipe M.S.S."/>
            <person name="Fiorentin L."/>
            <person name="Franco G.R."/>
            <person name="Freitas N.S.A."/>
            <person name="Frias D."/>
            <person name="Grangeiro T.B."/>
            <person name="Grisard E.C."/>
            <person name="Guimaraes C.T."/>
            <person name="Hungria M."/>
            <person name="Jardim S.N."/>
            <person name="Krieger M.A."/>
            <person name="Laurino J.P."/>
            <person name="Lima L.F.A."/>
            <person name="Lopes M.I."/>
            <person name="Loreto E.L.S."/>
            <person name="Madeira H.M.F."/>
            <person name="Manfio G.P."/>
            <person name="Maranhao A.Q."/>
            <person name="Martinkovics C.T."/>
            <person name="Medeiros S.R.B."/>
            <person name="Moreira M.A.M."/>
            <person name="Neiva M."/>
            <person name="Ramalho-Neto C.E."/>
            <person name="Nicolas M.F."/>
            <person name="Oliveira S.C."/>
            <person name="Paixao R.F.C."/>
            <person name="Pedrosa F.O."/>
            <person name="Pena S.D.J."/>
            <person name="Pereira M."/>
            <person name="Pereira-Ferrari L."/>
            <person name="Piffer I."/>
            <person name="Pinto L.S."/>
            <person name="Potrich D.P."/>
            <person name="Salim A.C.M."/>
            <person name="Santos F.R."/>
            <person name="Schmitt R."/>
            <person name="Schneider M.P.C."/>
            <person name="Schrank A."/>
            <person name="Schrank I.S."/>
            <person name="Schuck A.F."/>
            <person name="Seuanez H.N."/>
            <person name="Silva D.W."/>
            <person name="Silva R."/>
            <person name="Silva S.C."/>
            <person name="Soares C.M.A."/>
            <person name="Souza K.R.L."/>
            <person name="Souza R.C."/>
            <person name="Staats C.C."/>
            <person name="Steffens M.B.R."/>
            <person name="Teixeira S.M.R."/>
            <person name="Urmenyi T.P."/>
            <person name="Vainstein M.H."/>
            <person name="Zuccherato L.W."/>
            <person name="Simpson A.J.G."/>
            <person name="Zaha A."/>
        </authorList>
    </citation>
    <scope>NUCLEOTIDE SEQUENCE [LARGE SCALE GENOMIC DNA]</scope>
    <source>
        <strain>7448</strain>
    </source>
</reference>